<comment type="function">
    <text evidence="1">Key component of the proton channel; it plays a direct role in the translocation of protons across the membrane.</text>
</comment>
<comment type="subunit">
    <text evidence="1">F-type ATPases have 2 components, CF(1) - the catalytic core - and CF(0) - the membrane proton channel. CF(1) has five subunits: alpha(3), beta(3), gamma(1), delta(1), epsilon(1). CF(0) has three main subunits: a(1), b(2) and c(9-12). The alpha and beta chains form an alternating ring which encloses part of the gamma chain. CF(1) is attached to CF(0) by a central stalk formed by the gamma and epsilon chains, while a peripheral stalk is formed by the delta and b chains.</text>
</comment>
<comment type="subcellular location">
    <subcellularLocation>
        <location evidence="1">Cell inner membrane</location>
        <topology evidence="1">Multi-pass membrane protein</topology>
    </subcellularLocation>
</comment>
<comment type="similarity">
    <text evidence="1">Belongs to the ATPase A chain family.</text>
</comment>
<gene>
    <name evidence="1" type="primary">atpB</name>
    <name type="ordered locus">BCAN_A0387</name>
</gene>
<evidence type="ECO:0000255" key="1">
    <source>
        <dbReference type="HAMAP-Rule" id="MF_01393"/>
    </source>
</evidence>
<name>ATP6_BRUC2</name>
<sequence length="249" mass="26979">MANDPIHQFQVSRWIPIDVGGVDLSFTNVSAFMVATVVLASGFLYLTSSGRGLIPTRLQSVSEMAYEFVATSLRDSAGSKGMKFFPFVFSLFMFVLVANFIGLFPYFYTVTSQIIVTFALSLLVIGTVIFYGFFKHGFGFLKLFVPSGVPGIIVPLVVLIEIISFLSRPISLSVRLFANMLAGHITLKVFAGFVVSLSSLGALGIGGAVLPLLMTVAITALEFLVAFLQAYVFTVLTCMYINDAVHPGH</sequence>
<keyword id="KW-0066">ATP synthesis</keyword>
<keyword id="KW-0997">Cell inner membrane</keyword>
<keyword id="KW-1003">Cell membrane</keyword>
<keyword id="KW-0138">CF(0)</keyword>
<keyword id="KW-0375">Hydrogen ion transport</keyword>
<keyword id="KW-0406">Ion transport</keyword>
<keyword id="KW-0472">Membrane</keyword>
<keyword id="KW-1185">Reference proteome</keyword>
<keyword id="KW-0812">Transmembrane</keyword>
<keyword id="KW-1133">Transmembrane helix</keyword>
<keyword id="KW-0813">Transport</keyword>
<proteinExistence type="inferred from homology"/>
<feature type="chain" id="PRO_0000362255" description="ATP synthase subunit a">
    <location>
        <begin position="1"/>
        <end position="249"/>
    </location>
</feature>
<feature type="transmembrane region" description="Helical" evidence="1">
    <location>
        <begin position="26"/>
        <end position="46"/>
    </location>
</feature>
<feature type="transmembrane region" description="Helical" evidence="1">
    <location>
        <begin position="84"/>
        <end position="104"/>
    </location>
</feature>
<feature type="transmembrane region" description="Helical" evidence="1">
    <location>
        <begin position="114"/>
        <end position="134"/>
    </location>
</feature>
<feature type="transmembrane region" description="Helical" evidence="1">
    <location>
        <begin position="143"/>
        <end position="163"/>
    </location>
</feature>
<feature type="transmembrane region" description="Helical" evidence="1">
    <location>
        <begin position="185"/>
        <end position="205"/>
    </location>
</feature>
<feature type="transmembrane region" description="Helical" evidence="1">
    <location>
        <begin position="208"/>
        <end position="228"/>
    </location>
</feature>
<protein>
    <recommendedName>
        <fullName evidence="1">ATP synthase subunit a</fullName>
    </recommendedName>
    <alternativeName>
        <fullName evidence="1">ATP synthase F0 sector subunit a</fullName>
    </alternativeName>
    <alternativeName>
        <fullName evidence="1">F-ATPase subunit 6</fullName>
    </alternativeName>
</protein>
<reference key="1">
    <citation type="submission" date="2007-10" db="EMBL/GenBank/DDBJ databases">
        <title>Brucella canis ATCC 23365 whole genome shotgun sequencing project.</title>
        <authorList>
            <person name="Setubal J.C."/>
            <person name="Bowns C."/>
            <person name="Boyle S."/>
            <person name="Crasta O.R."/>
            <person name="Czar M.J."/>
            <person name="Dharmanolla C."/>
            <person name="Gillespie J.J."/>
            <person name="Kenyon R.W."/>
            <person name="Lu J."/>
            <person name="Mane S."/>
            <person name="Mohapatra S."/>
            <person name="Nagrani S."/>
            <person name="Purkayastha A."/>
            <person name="Rajasimha H.K."/>
            <person name="Shallom J.M."/>
            <person name="Shallom S."/>
            <person name="Shukla M."/>
            <person name="Snyder E.E."/>
            <person name="Sobral B.W."/>
            <person name="Wattam A.R."/>
            <person name="Will R."/>
            <person name="Williams K."/>
            <person name="Yoo H."/>
            <person name="Bruce D."/>
            <person name="Detter C."/>
            <person name="Munk C."/>
            <person name="Brettin T.S."/>
        </authorList>
    </citation>
    <scope>NUCLEOTIDE SEQUENCE [LARGE SCALE GENOMIC DNA]</scope>
    <source>
        <strain>ATCC 23365 / NCTC 10854 / RM-666</strain>
    </source>
</reference>
<dbReference type="EMBL" id="CP000872">
    <property type="protein sequence ID" value="ABX61474.1"/>
    <property type="molecule type" value="Genomic_DNA"/>
</dbReference>
<dbReference type="RefSeq" id="WP_002963543.1">
    <property type="nucleotide sequence ID" value="NC_010103.1"/>
</dbReference>
<dbReference type="SMR" id="A9M8F8"/>
<dbReference type="KEGG" id="bcs:BCAN_A0387"/>
<dbReference type="HOGENOM" id="CLU_041018_0_2_5"/>
<dbReference type="PhylomeDB" id="A9M8F8"/>
<dbReference type="Proteomes" id="UP000001385">
    <property type="component" value="Chromosome I"/>
</dbReference>
<dbReference type="GO" id="GO:0005886">
    <property type="term" value="C:plasma membrane"/>
    <property type="evidence" value="ECO:0007669"/>
    <property type="project" value="UniProtKB-SubCell"/>
</dbReference>
<dbReference type="GO" id="GO:0045259">
    <property type="term" value="C:proton-transporting ATP synthase complex"/>
    <property type="evidence" value="ECO:0007669"/>
    <property type="project" value="UniProtKB-KW"/>
</dbReference>
<dbReference type="GO" id="GO:0046933">
    <property type="term" value="F:proton-transporting ATP synthase activity, rotational mechanism"/>
    <property type="evidence" value="ECO:0007669"/>
    <property type="project" value="UniProtKB-UniRule"/>
</dbReference>
<dbReference type="CDD" id="cd00310">
    <property type="entry name" value="ATP-synt_Fo_a_6"/>
    <property type="match status" value="1"/>
</dbReference>
<dbReference type="FunFam" id="1.20.120.220:FF:000003">
    <property type="entry name" value="ATP synthase subunit a"/>
    <property type="match status" value="1"/>
</dbReference>
<dbReference type="Gene3D" id="1.20.120.220">
    <property type="entry name" value="ATP synthase, F0 complex, subunit A"/>
    <property type="match status" value="1"/>
</dbReference>
<dbReference type="HAMAP" id="MF_01393">
    <property type="entry name" value="ATP_synth_a_bact"/>
    <property type="match status" value="1"/>
</dbReference>
<dbReference type="InterPro" id="IPR000568">
    <property type="entry name" value="ATP_synth_F0_asu"/>
</dbReference>
<dbReference type="InterPro" id="IPR023011">
    <property type="entry name" value="ATP_synth_F0_asu_AS"/>
</dbReference>
<dbReference type="InterPro" id="IPR045083">
    <property type="entry name" value="ATP_synth_F0_asu_bact/mt"/>
</dbReference>
<dbReference type="InterPro" id="IPR035908">
    <property type="entry name" value="F0_ATP_A_sf"/>
</dbReference>
<dbReference type="NCBIfam" id="TIGR01131">
    <property type="entry name" value="ATP_synt_6_or_A"/>
    <property type="match status" value="1"/>
</dbReference>
<dbReference type="NCBIfam" id="NF004482">
    <property type="entry name" value="PRK05815.2-4"/>
    <property type="match status" value="1"/>
</dbReference>
<dbReference type="PANTHER" id="PTHR11410">
    <property type="entry name" value="ATP SYNTHASE SUBUNIT A"/>
    <property type="match status" value="1"/>
</dbReference>
<dbReference type="PANTHER" id="PTHR11410:SF0">
    <property type="entry name" value="ATP SYNTHASE SUBUNIT A"/>
    <property type="match status" value="1"/>
</dbReference>
<dbReference type="Pfam" id="PF00119">
    <property type="entry name" value="ATP-synt_A"/>
    <property type="match status" value="1"/>
</dbReference>
<dbReference type="PRINTS" id="PR00123">
    <property type="entry name" value="ATPASEA"/>
</dbReference>
<dbReference type="SUPFAM" id="SSF81336">
    <property type="entry name" value="F1F0 ATP synthase subunit A"/>
    <property type="match status" value="1"/>
</dbReference>
<dbReference type="PROSITE" id="PS00449">
    <property type="entry name" value="ATPASE_A"/>
    <property type="match status" value="1"/>
</dbReference>
<accession>A9M8F8</accession>
<organism>
    <name type="scientific">Brucella canis (strain ATCC 23365 / NCTC 10854 / RM-666)</name>
    <dbReference type="NCBI Taxonomy" id="483179"/>
    <lineage>
        <taxon>Bacteria</taxon>
        <taxon>Pseudomonadati</taxon>
        <taxon>Pseudomonadota</taxon>
        <taxon>Alphaproteobacteria</taxon>
        <taxon>Hyphomicrobiales</taxon>
        <taxon>Brucellaceae</taxon>
        <taxon>Brucella/Ochrobactrum group</taxon>
        <taxon>Brucella</taxon>
    </lineage>
</organism>